<reference key="1">
    <citation type="journal article" date="1998" name="Science">
        <title>Genome sequence of the nematode C. elegans: a platform for investigating biology.</title>
        <authorList>
            <consortium name="The C. elegans sequencing consortium"/>
        </authorList>
    </citation>
    <scope>NUCLEOTIDE SEQUENCE [LARGE SCALE GENOMIC DNA]</scope>
    <source>
        <strain>Bristol N2</strain>
    </source>
</reference>
<reference evidence="10 11" key="2">
    <citation type="journal article" date="2016" name="PLoS Genet.">
        <title>The Caenorhabditis elegans protein FIC-1 is an AMPylase that covalently modifies heat-shock 70 family proteins, translation elongation factors and histones.</title>
        <authorList>
            <person name="Truttmann M.C."/>
            <person name="Cruz V.E."/>
            <person name="Guo X."/>
            <person name="Engert C."/>
            <person name="Schwartz T.U."/>
            <person name="Ploegh H.L."/>
        </authorList>
    </citation>
    <scope>X-RAY CRYSTALLOGRAPHY (2.91 ANGSTROMS) OF 134-508</scope>
    <scope>FUNCTION</scope>
    <scope>CATALYTIC ACTIVITY</scope>
    <scope>SUBUNIT</scope>
    <scope>SUBCELLULAR LOCATION</scope>
    <scope>TISSUE SPECIFICITY</scope>
    <scope>DEVELOPMENTAL STAGE</scope>
    <scope>AUTO-AMPYLATION AT THR-352 AND THR-476</scope>
    <scope>IDENTIFICATION BY MASS SPECTROMETRY</scope>
    <scope>MUTAGENESIS OF GLU-274; ILE-298 AND HIS-404</scope>
</reference>
<feature type="chain" id="PRO_0000381779" description="Protein adenylyltransferase fic-1">
    <location>
        <begin position="1"/>
        <end position="508"/>
    </location>
</feature>
<feature type="transmembrane region" description="Helical" evidence="4">
    <location>
        <begin position="44"/>
        <end position="64"/>
    </location>
</feature>
<feature type="repeat" description="TPR 1">
    <location>
        <begin position="147"/>
        <end position="180"/>
    </location>
</feature>
<feature type="repeat" description="TPR 2">
    <location>
        <begin position="181"/>
        <end position="214"/>
    </location>
</feature>
<feature type="domain" description="Fido" evidence="5">
    <location>
        <begin position="326"/>
        <end position="461"/>
    </location>
</feature>
<feature type="region of interest" description="Disordered" evidence="6">
    <location>
        <begin position="482"/>
        <end position="508"/>
    </location>
</feature>
<feature type="short sequence motif" description="Inhibitory (S/T)XXXE(G/N) motif">
    <location>
        <begin position="270"/>
        <end position="275"/>
    </location>
</feature>
<feature type="compositionally biased region" description="Basic and acidic residues" evidence="6">
    <location>
        <begin position="496"/>
        <end position="508"/>
    </location>
</feature>
<feature type="active site" evidence="1">
    <location>
        <position position="404"/>
    </location>
</feature>
<feature type="binding site" evidence="3">
    <location>
        <position position="274"/>
    </location>
    <ligand>
        <name>ATP</name>
        <dbReference type="ChEBI" id="CHEBI:30616"/>
    </ligand>
</feature>
<feature type="binding site" evidence="3">
    <location>
        <begin position="357"/>
        <end position="360"/>
    </location>
    <ligand>
        <name>ATP</name>
        <dbReference type="ChEBI" id="CHEBI:30616"/>
    </ligand>
</feature>
<feature type="binding site" evidence="3">
    <location>
        <begin position="408"/>
        <end position="415"/>
    </location>
    <ligand>
        <name>ATP</name>
        <dbReference type="ChEBI" id="CHEBI:30616"/>
    </ligand>
</feature>
<feature type="binding site" evidence="3">
    <location>
        <begin position="440"/>
        <end position="441"/>
    </location>
    <ligand>
        <name>ATP</name>
        <dbReference type="ChEBI" id="CHEBI:30616"/>
    </ligand>
</feature>
<feature type="binding site" evidence="3">
    <location>
        <position position="448"/>
    </location>
    <ligand>
        <name>ATP</name>
        <dbReference type="ChEBI" id="CHEBI:30616"/>
    </ligand>
</feature>
<feature type="site" description="Important for autoinhibition of adenylyltransferase activity" evidence="3">
    <location>
        <position position="274"/>
    </location>
</feature>
<feature type="modified residue" description="O-AMP-threonine; by autocatalysis" evidence="7">
    <location>
        <position position="352"/>
    </location>
</feature>
<feature type="modified residue" description="O-AMP-threonine; by autocatalysis" evidence="7">
    <location>
        <position position="476"/>
    </location>
</feature>
<feature type="mutagenesis site" description="Enhanced adenylyltransferase activity. Promiscuous use of ATP, GTP, CTP or UTP. In vitro adenylyltransferase activity towards histones H2A, H2B, H3.1, H3.2 and H3.3, but not H1 or H4. Increases resistance to P.aeruginosa-mediated killing. Reduced adenylyltransferase activity when associated with D-298." evidence="7">
    <original>E</original>
    <variation>G</variation>
    <location>
        <position position="274"/>
    </location>
</feature>
<feature type="mutagenesis site" description="Disrupts homodimer formation. Reduced adenylyltransferase activity when associated with G-274." evidence="7">
    <original>I</original>
    <variation>D</variation>
    <location>
        <position position="298"/>
    </location>
</feature>
<feature type="mutagenesis site" description="Abolishes adenylyltransferase activity." evidence="7">
    <original>H</original>
    <variation>A</variation>
    <location>
        <position position="404"/>
    </location>
</feature>
<feature type="helix" evidence="12">
    <location>
        <begin position="147"/>
        <end position="159"/>
    </location>
</feature>
<feature type="helix" evidence="12">
    <location>
        <begin position="164"/>
        <end position="176"/>
    </location>
</feature>
<feature type="helix" evidence="12">
    <location>
        <begin position="181"/>
        <end position="193"/>
    </location>
</feature>
<feature type="helix" evidence="12">
    <location>
        <begin position="197"/>
        <end position="210"/>
    </location>
</feature>
<feature type="helix" evidence="12">
    <location>
        <begin position="215"/>
        <end position="244"/>
    </location>
</feature>
<feature type="helix" evidence="12">
    <location>
        <begin position="252"/>
        <end position="272"/>
    </location>
</feature>
<feature type="turn" evidence="12">
    <location>
        <begin position="273"/>
        <end position="275"/>
    </location>
</feature>
<feature type="helix" evidence="12">
    <location>
        <begin position="280"/>
        <end position="289"/>
    </location>
</feature>
<feature type="helix" evidence="12">
    <location>
        <begin position="298"/>
        <end position="316"/>
    </location>
</feature>
<feature type="turn" evidence="12">
    <location>
        <begin position="317"/>
        <end position="319"/>
    </location>
</feature>
<feature type="strand" evidence="12">
    <location>
        <begin position="320"/>
        <end position="322"/>
    </location>
</feature>
<feature type="helix" evidence="12">
    <location>
        <begin position="328"/>
        <end position="339"/>
    </location>
</feature>
<feature type="turn" evidence="12">
    <location>
        <begin position="340"/>
        <end position="342"/>
    </location>
</feature>
<feature type="turn" evidence="12">
    <location>
        <begin position="344"/>
        <end position="348"/>
    </location>
</feature>
<feature type="helix" evidence="12">
    <location>
        <begin position="369"/>
        <end position="380"/>
    </location>
</feature>
<feature type="helix" evidence="12">
    <location>
        <begin position="382"/>
        <end position="385"/>
    </location>
</feature>
<feature type="helix" evidence="12">
    <location>
        <begin position="389"/>
        <end position="403"/>
    </location>
</feature>
<feature type="strand" evidence="12">
    <location>
        <begin position="406"/>
        <end position="408"/>
    </location>
</feature>
<feature type="helix" evidence="12">
    <location>
        <begin position="410"/>
        <end position="423"/>
    </location>
</feature>
<feature type="turn" evidence="12">
    <location>
        <begin position="424"/>
        <end position="426"/>
    </location>
</feature>
<feature type="helix" evidence="12">
    <location>
        <begin position="434"/>
        <end position="436"/>
    </location>
</feature>
<feature type="helix" evidence="12">
    <location>
        <begin position="437"/>
        <end position="447"/>
    </location>
</feature>
<feature type="turn" evidence="12">
    <location>
        <begin position="448"/>
        <end position="450"/>
    </location>
</feature>
<feature type="helix" evidence="12">
    <location>
        <begin position="453"/>
        <end position="476"/>
    </location>
</feature>
<comment type="function">
    <text evidence="1 2 7">Protein that can both mediate the addition of adenosine 5'-monophosphate (AMP) to specific residues of target proteins (AMPylation), and the removal of the same modification from target proteins (de-AMPylation), depending on the context (By similarity). The side chain of Glu-274 determines which of the two opposing activities (AMPylase or de-AMPylase) will take place (By similarity). Adenylyltransferase that mediates the addition of adenosine 5'-monophosphate (AMP) to specific residues of target proteins (PubMed:27138431). In vivo target proteins include the heat-shock 70 family proteins hsp-1 and hsp-3 and the translation elongation factors eef-1A, eef-1G and eef-2 (PubMed:27138431). Can AMPylate core histone H3 in vitro (PubMed:27138431). Can also act as a phosphodiesterase by mediating removal of ATP (de-AMPylation) from target proteins (By similarity). Decreases susceptibility to P.aeruginosa-mediated killing and might therefore play a role in the innate immune response (PubMed:27138431).</text>
</comment>
<comment type="catalytic activity">
    <reaction evidence="3">
        <text>L-tyrosyl-[protein] + ATP = O-(5'-adenylyl)-L-tyrosyl-[protein] + diphosphate</text>
        <dbReference type="Rhea" id="RHEA:54288"/>
        <dbReference type="Rhea" id="RHEA-COMP:10136"/>
        <dbReference type="Rhea" id="RHEA-COMP:13846"/>
        <dbReference type="ChEBI" id="CHEBI:30616"/>
        <dbReference type="ChEBI" id="CHEBI:33019"/>
        <dbReference type="ChEBI" id="CHEBI:46858"/>
        <dbReference type="ChEBI" id="CHEBI:83624"/>
        <dbReference type="EC" id="2.7.7.108"/>
    </reaction>
</comment>
<comment type="catalytic activity">
    <reaction evidence="2">
        <text>L-threonyl-[protein] + ATP = 3-O-(5'-adenylyl)-L-threonyl-[protein] + diphosphate</text>
        <dbReference type="Rhea" id="RHEA:54292"/>
        <dbReference type="Rhea" id="RHEA-COMP:11060"/>
        <dbReference type="Rhea" id="RHEA-COMP:13847"/>
        <dbReference type="ChEBI" id="CHEBI:30013"/>
        <dbReference type="ChEBI" id="CHEBI:30616"/>
        <dbReference type="ChEBI" id="CHEBI:33019"/>
        <dbReference type="ChEBI" id="CHEBI:138113"/>
        <dbReference type="EC" id="2.7.7.108"/>
    </reaction>
</comment>
<comment type="catalytic activity">
    <reaction evidence="2">
        <text>3-O-(5'-adenylyl)-L-threonyl-[protein] + H2O = L-threonyl-[protein] + AMP + H(+)</text>
        <dbReference type="Rhea" id="RHEA:55932"/>
        <dbReference type="Rhea" id="RHEA-COMP:11060"/>
        <dbReference type="Rhea" id="RHEA-COMP:13847"/>
        <dbReference type="ChEBI" id="CHEBI:15377"/>
        <dbReference type="ChEBI" id="CHEBI:15378"/>
        <dbReference type="ChEBI" id="CHEBI:30013"/>
        <dbReference type="ChEBI" id="CHEBI:138113"/>
        <dbReference type="ChEBI" id="CHEBI:456215"/>
    </reaction>
</comment>
<comment type="activity regulation">
    <text evidence="1 3">The side chain of Glu-274 determines which of the two opposing activities (AMPylase or de-AMPylase) will take place. In response to endoplasmic reticulum stress, mediates de-AMPylase activity (By similarity). Adenylyltransferase activity is inhibited by the inhibitory helix present at the N-terminus: Glu-274 binds ATP and competes with ATP-binding at Arg-415, thereby preventing adenylyltransferase activity (By similarity). In unstressed cells, disengagement of Glu-274 promotes adenylyltransferase activity (By similarity). Activation dissociates ATP-binding from Glu-274, allowing ordered binding of the entire ATP moiety with the alpha-phosphate in an orientation that is productive for accepting an incoming target hydroxyl side chain (By similarity).</text>
</comment>
<comment type="subunit">
    <text evidence="7">Forms homodimers; homodimerization might be required for adenylyltransferase activity.</text>
</comment>
<comment type="subcellular location">
    <subcellularLocation>
        <location evidence="7">Endoplasmic reticulum membrane</location>
        <topology>Single-pass membrane protein</topology>
    </subcellularLocation>
    <subcellularLocation>
        <location evidence="7">Nucleus membrane</location>
        <topology>Single-pass membrane protein</topology>
    </subcellularLocation>
    <text evidence="7">Predominantly localized to the endoplasmic reticulum and to the nucleus.</text>
</comment>
<comment type="tissue specificity">
    <text evidence="7">Ubiquitously expressed, with high expression in the germline.</text>
</comment>
<comment type="developmental stage">
    <text evidence="7">Expressed at all developmental stages, with high expression during embryogenesis.</text>
</comment>
<comment type="domain">
    <text evidence="3">The fido domain mediates the adenylyltransferase activity.</text>
</comment>
<comment type="similarity">
    <text evidence="8">Belongs to the fic family.</text>
</comment>
<evidence type="ECO:0000250" key="1">
    <source>
        <dbReference type="UniProtKB" id="A0A061I403"/>
    </source>
</evidence>
<evidence type="ECO:0000250" key="2">
    <source>
        <dbReference type="UniProtKB" id="Q8SWV6"/>
    </source>
</evidence>
<evidence type="ECO:0000250" key="3">
    <source>
        <dbReference type="UniProtKB" id="Q9BVA6"/>
    </source>
</evidence>
<evidence type="ECO:0000255" key="4"/>
<evidence type="ECO:0000255" key="5">
    <source>
        <dbReference type="PROSITE-ProRule" id="PRU00791"/>
    </source>
</evidence>
<evidence type="ECO:0000256" key="6">
    <source>
        <dbReference type="SAM" id="MobiDB-lite"/>
    </source>
</evidence>
<evidence type="ECO:0000269" key="7">
    <source>
    </source>
</evidence>
<evidence type="ECO:0000305" key="8"/>
<evidence type="ECO:0000312" key="9">
    <source>
        <dbReference type="WormBase" id="ZK593.8"/>
    </source>
</evidence>
<evidence type="ECO:0007744" key="10">
    <source>
        <dbReference type="PDB" id="5JJ6"/>
    </source>
</evidence>
<evidence type="ECO:0007744" key="11">
    <source>
        <dbReference type="PDB" id="5JJ7"/>
    </source>
</evidence>
<evidence type="ECO:0007829" key="12">
    <source>
        <dbReference type="PDB" id="5JJ6"/>
    </source>
</evidence>
<name>FICD_CAEEL</name>
<gene>
    <name evidence="9" type="primary">fic-1</name>
    <name type="ORF">ZK593.8</name>
</gene>
<organism>
    <name type="scientific">Caenorhabditis elegans</name>
    <dbReference type="NCBI Taxonomy" id="6239"/>
    <lineage>
        <taxon>Eukaryota</taxon>
        <taxon>Metazoa</taxon>
        <taxon>Ecdysozoa</taxon>
        <taxon>Nematoda</taxon>
        <taxon>Chromadorea</taxon>
        <taxon>Rhabditida</taxon>
        <taxon>Rhabditina</taxon>
        <taxon>Rhabditomorpha</taxon>
        <taxon>Rhabditoidea</taxon>
        <taxon>Rhabditidae</taxon>
        <taxon>Peloderinae</taxon>
        <taxon>Caenorhabditis</taxon>
    </lineage>
</organism>
<protein>
    <recommendedName>
        <fullName>Protein adenylyltransferase fic-1</fullName>
        <ecNumber evidence="7">2.7.7.108</ecNumber>
    </recommendedName>
    <alternativeName>
        <fullName evidence="8">De-AMPylase fic-1</fullName>
        <ecNumber evidence="1 2">3.1.4.-</ecNumber>
    </alternativeName>
</protein>
<keyword id="KW-0002">3D-structure</keyword>
<keyword id="KW-0067">ATP-binding</keyword>
<keyword id="KW-0256">Endoplasmic reticulum</keyword>
<keyword id="KW-0378">Hydrolase</keyword>
<keyword id="KW-0472">Membrane</keyword>
<keyword id="KW-0547">Nucleotide-binding</keyword>
<keyword id="KW-0548">Nucleotidyltransferase</keyword>
<keyword id="KW-0539">Nucleus</keyword>
<keyword id="KW-0597">Phosphoprotein</keyword>
<keyword id="KW-1185">Reference proteome</keyword>
<keyword id="KW-0677">Repeat</keyword>
<keyword id="KW-0802">TPR repeat</keyword>
<keyword id="KW-0808">Transferase</keyword>
<keyword id="KW-0812">Transmembrane</keyword>
<keyword id="KW-1133">Transmembrane helix</keyword>
<accession>Q23544</accession>
<sequence>MSVRRRTHSDDFSYLLEKTRRPSKLNVVQEDPKSAPPQGYSLTTVIIISVLVSLICQHFVPYAVSTLHTVIKNSPKQKSSPPPSNRLNIGFISGNSPEKYAPAVQKPTFLVDPIYDEKWKGIQTAVPVMSTQTDEKRENDPAKVKEAILAAKAAGRSRKDGNLERAMTIMEHAMALAPTNPQILIEMGQIREMHNELVEADQCYVKALAYDPGNSEALVLRARTTPLVSAIDRKMLRSVHDLRDEFNHLQHSTALRRMMRETYFLYVYHTVAIEGNTLSLGQTRAILESGMVIPGKSIREHNEVIGMDAALRFLNCSLLSKEHDEISIDDILEMHRRVLGNADPVEAGRIRTTQVYVGRFTPVSPEYVMEQLKDIVDWLNDESTLTIDPIERAAIAHYKLVLVHPFTDGNGRTARLLLNLIMMRSGFPPVILPVETRAEYYASLHVANLGDLRPFVRYVAKHSEASIQRYIGAMKTSSDNILNSGDSKLTPEESEVSEKIEAECRAGN</sequence>
<dbReference type="EC" id="2.7.7.108" evidence="7"/>
<dbReference type="EC" id="3.1.4.-" evidence="1 2"/>
<dbReference type="EMBL" id="Z69385">
    <property type="protein sequence ID" value="CAA93429.2"/>
    <property type="molecule type" value="Genomic_DNA"/>
</dbReference>
<dbReference type="PIR" id="T27927">
    <property type="entry name" value="T27927"/>
</dbReference>
<dbReference type="RefSeq" id="NP_502036.1">
    <property type="nucleotide sequence ID" value="NM_069635.6"/>
</dbReference>
<dbReference type="PDB" id="5JJ6">
    <property type="method" value="X-ray"/>
    <property type="resolution" value="2.91 A"/>
    <property type="chains" value="A/B=134-508"/>
</dbReference>
<dbReference type="PDB" id="5JJ7">
    <property type="method" value="X-ray"/>
    <property type="resolution" value="3.75 A"/>
    <property type="chains" value="A/B=134-508"/>
</dbReference>
<dbReference type="PDBsum" id="5JJ6"/>
<dbReference type="PDBsum" id="5JJ7"/>
<dbReference type="SMR" id="Q23544"/>
<dbReference type="BioGRID" id="43090">
    <property type="interactions" value="6"/>
</dbReference>
<dbReference type="FunCoup" id="Q23544">
    <property type="interactions" value="1871"/>
</dbReference>
<dbReference type="STRING" id="6239.ZK593.8.1"/>
<dbReference type="PaxDb" id="6239-ZK593.8"/>
<dbReference type="EnsemblMetazoa" id="ZK593.8.1">
    <property type="protein sequence ID" value="ZK593.8.1"/>
    <property type="gene ID" value="WBGene00014004"/>
</dbReference>
<dbReference type="GeneID" id="177990"/>
<dbReference type="KEGG" id="cel:CELE_ZK593.8"/>
<dbReference type="UCSC" id="ZK593.8">
    <property type="organism name" value="c. elegans"/>
</dbReference>
<dbReference type="AGR" id="WB:WBGene00014004"/>
<dbReference type="CTD" id="177990"/>
<dbReference type="WormBase" id="ZK593.8">
    <property type="protein sequence ID" value="CE28722"/>
    <property type="gene ID" value="WBGene00014004"/>
    <property type="gene designation" value="fic-1"/>
</dbReference>
<dbReference type="eggNOG" id="KOG3824">
    <property type="taxonomic scope" value="Eukaryota"/>
</dbReference>
<dbReference type="GeneTree" id="ENSGT00390000008873"/>
<dbReference type="HOGENOM" id="CLU_040460_0_1_1"/>
<dbReference type="InParanoid" id="Q23544"/>
<dbReference type="OMA" id="QLRCQLW"/>
<dbReference type="OrthoDB" id="439046at2759"/>
<dbReference type="PhylomeDB" id="Q23544"/>
<dbReference type="PRO" id="PR:Q23544"/>
<dbReference type="Proteomes" id="UP000001940">
    <property type="component" value="Chromosome IV"/>
</dbReference>
<dbReference type="Bgee" id="WBGene00014004">
    <property type="expression patterns" value="Expressed in germ line (C elegans) and 4 other cell types or tissues"/>
</dbReference>
<dbReference type="GO" id="GO:0005737">
    <property type="term" value="C:cytoplasm"/>
    <property type="evidence" value="ECO:0000314"/>
    <property type="project" value="WormBase"/>
</dbReference>
<dbReference type="GO" id="GO:0005783">
    <property type="term" value="C:endoplasmic reticulum"/>
    <property type="evidence" value="ECO:0000314"/>
    <property type="project" value="WormBase"/>
</dbReference>
<dbReference type="GO" id="GO:0005789">
    <property type="term" value="C:endoplasmic reticulum membrane"/>
    <property type="evidence" value="ECO:0007669"/>
    <property type="project" value="UniProtKB-SubCell"/>
</dbReference>
<dbReference type="GO" id="GO:0005635">
    <property type="term" value="C:nuclear envelope"/>
    <property type="evidence" value="ECO:0000314"/>
    <property type="project" value="WormBase"/>
</dbReference>
<dbReference type="GO" id="GO:0031965">
    <property type="term" value="C:nuclear membrane"/>
    <property type="evidence" value="ECO:0007669"/>
    <property type="project" value="UniProtKB-SubCell"/>
</dbReference>
<dbReference type="GO" id="GO:0070733">
    <property type="term" value="F:AMPylase activity"/>
    <property type="evidence" value="ECO:0000314"/>
    <property type="project" value="WormBase"/>
</dbReference>
<dbReference type="GO" id="GO:0005524">
    <property type="term" value="F:ATP binding"/>
    <property type="evidence" value="ECO:0007669"/>
    <property type="project" value="UniProtKB-KW"/>
</dbReference>
<dbReference type="GO" id="GO:0016787">
    <property type="term" value="F:hydrolase activity"/>
    <property type="evidence" value="ECO:0007669"/>
    <property type="project" value="UniProtKB-KW"/>
</dbReference>
<dbReference type="GO" id="GO:0050829">
    <property type="term" value="P:defense response to Gram-negative bacterium"/>
    <property type="evidence" value="ECO:0000315"/>
    <property type="project" value="WormBase"/>
</dbReference>
<dbReference type="FunFam" id="1.10.3290.10:FF:000003">
    <property type="entry name" value="Protein adenylyltransferase fic-1"/>
    <property type="match status" value="1"/>
</dbReference>
<dbReference type="Gene3D" id="1.10.3290.10">
    <property type="entry name" value="Fido-like domain"/>
    <property type="match status" value="1"/>
</dbReference>
<dbReference type="Gene3D" id="1.25.40.10">
    <property type="entry name" value="Tetratricopeptide repeat domain"/>
    <property type="match status" value="1"/>
</dbReference>
<dbReference type="InterPro" id="IPR003812">
    <property type="entry name" value="Fido"/>
</dbReference>
<dbReference type="InterPro" id="IPR036597">
    <property type="entry name" value="Fido-like_dom_sf"/>
</dbReference>
<dbReference type="InterPro" id="IPR040198">
    <property type="entry name" value="Fido_containing"/>
</dbReference>
<dbReference type="InterPro" id="IPR011990">
    <property type="entry name" value="TPR-like_helical_dom_sf"/>
</dbReference>
<dbReference type="InterPro" id="IPR019734">
    <property type="entry name" value="TPR_rpt"/>
</dbReference>
<dbReference type="PANTHER" id="PTHR13504">
    <property type="entry name" value="FIDO DOMAIN-CONTAINING PROTEIN DDB_G0283145"/>
    <property type="match status" value="1"/>
</dbReference>
<dbReference type="PANTHER" id="PTHR13504:SF34">
    <property type="entry name" value="PROTEIN ADENYLYLTRANSFERASE FICD"/>
    <property type="match status" value="1"/>
</dbReference>
<dbReference type="Pfam" id="PF02661">
    <property type="entry name" value="Fic"/>
    <property type="match status" value="1"/>
</dbReference>
<dbReference type="SUPFAM" id="SSF140931">
    <property type="entry name" value="Fic-like"/>
    <property type="match status" value="1"/>
</dbReference>
<dbReference type="SUPFAM" id="SSF48452">
    <property type="entry name" value="TPR-like"/>
    <property type="match status" value="1"/>
</dbReference>
<dbReference type="PROSITE" id="PS51459">
    <property type="entry name" value="FIDO"/>
    <property type="match status" value="1"/>
</dbReference>
<dbReference type="PROSITE" id="PS50005">
    <property type="entry name" value="TPR"/>
    <property type="match status" value="2"/>
</dbReference>
<dbReference type="PROSITE" id="PS50293">
    <property type="entry name" value="TPR_REGION"/>
    <property type="match status" value="1"/>
</dbReference>
<proteinExistence type="evidence at protein level"/>